<feature type="chain" id="PRO_1000003501" description="Small ribosomal subunit protein bS18">
    <location>
        <begin position="1"/>
        <end position="106"/>
    </location>
</feature>
<feature type="region of interest" description="Disordered" evidence="2">
    <location>
        <begin position="1"/>
        <end position="34"/>
    </location>
</feature>
<feature type="compositionally biased region" description="Basic and acidic residues" evidence="2">
    <location>
        <begin position="1"/>
        <end position="22"/>
    </location>
</feature>
<reference key="1">
    <citation type="journal article" date="2009" name="BMC Microbiol.">
        <title>The genome sequence of Geobacter metallireducens: features of metabolism, physiology and regulation common and dissimilar to Geobacter sulfurreducens.</title>
        <authorList>
            <person name="Aklujkar M."/>
            <person name="Krushkal J."/>
            <person name="DiBartolo G."/>
            <person name="Lapidus A."/>
            <person name="Land M.L."/>
            <person name="Lovley D.R."/>
        </authorList>
    </citation>
    <scope>NUCLEOTIDE SEQUENCE [LARGE SCALE GENOMIC DNA]</scope>
    <source>
        <strain>ATCC 53774 / DSM 7210 / GS-15</strain>
    </source>
</reference>
<comment type="function">
    <text evidence="1">Binds as a heterodimer with protein bS6 to the central domain of the 16S rRNA, where it helps stabilize the platform of the 30S subunit.</text>
</comment>
<comment type="subunit">
    <text evidence="1">Part of the 30S ribosomal subunit. Forms a tight heterodimer with protein bS6.</text>
</comment>
<comment type="similarity">
    <text evidence="1">Belongs to the bacterial ribosomal protein bS18 family.</text>
</comment>
<protein>
    <recommendedName>
        <fullName evidence="1">Small ribosomal subunit protein bS18</fullName>
    </recommendedName>
    <alternativeName>
        <fullName evidence="3">30S ribosomal protein S18</fullName>
    </alternativeName>
</protein>
<keyword id="KW-1185">Reference proteome</keyword>
<keyword id="KW-0687">Ribonucleoprotein</keyword>
<keyword id="KW-0689">Ribosomal protein</keyword>
<keyword id="KW-0694">RNA-binding</keyword>
<keyword id="KW-0699">rRNA-binding</keyword>
<sequence length="106" mass="12483">MSEETTVRPERTERSERPERPQYRGNGPRKRRPFQRRKVCRFCADKDLVIDYKDPRVLRSFITERGKIVPRRISGNCSKHQREITEAIKRARNIALIPIASTHVVA</sequence>
<accession>Q39RR3</accession>
<evidence type="ECO:0000255" key="1">
    <source>
        <dbReference type="HAMAP-Rule" id="MF_00270"/>
    </source>
</evidence>
<evidence type="ECO:0000256" key="2">
    <source>
        <dbReference type="SAM" id="MobiDB-lite"/>
    </source>
</evidence>
<evidence type="ECO:0000305" key="3"/>
<name>RS18_GEOMG</name>
<organism>
    <name type="scientific">Geobacter metallireducens (strain ATCC 53774 / DSM 7210 / GS-15)</name>
    <dbReference type="NCBI Taxonomy" id="269799"/>
    <lineage>
        <taxon>Bacteria</taxon>
        <taxon>Pseudomonadati</taxon>
        <taxon>Thermodesulfobacteriota</taxon>
        <taxon>Desulfuromonadia</taxon>
        <taxon>Geobacterales</taxon>
        <taxon>Geobacteraceae</taxon>
        <taxon>Geobacter</taxon>
    </lineage>
</organism>
<proteinExistence type="inferred from homology"/>
<gene>
    <name evidence="1" type="primary">rpsR</name>
    <name type="ordered locus">Gmet_2843</name>
</gene>
<dbReference type="EMBL" id="CP000148">
    <property type="protein sequence ID" value="ABB33061.1"/>
    <property type="molecule type" value="Genomic_DNA"/>
</dbReference>
<dbReference type="RefSeq" id="WP_004514573.1">
    <property type="nucleotide sequence ID" value="NC_007517.1"/>
</dbReference>
<dbReference type="SMR" id="Q39RR3"/>
<dbReference type="STRING" id="269799.Gmet_2843"/>
<dbReference type="KEGG" id="gme:Gmet_2843"/>
<dbReference type="eggNOG" id="COG0238">
    <property type="taxonomic scope" value="Bacteria"/>
</dbReference>
<dbReference type="HOGENOM" id="CLU_148710_2_2_7"/>
<dbReference type="Proteomes" id="UP000007073">
    <property type="component" value="Chromosome"/>
</dbReference>
<dbReference type="GO" id="GO:0022627">
    <property type="term" value="C:cytosolic small ribosomal subunit"/>
    <property type="evidence" value="ECO:0007669"/>
    <property type="project" value="TreeGrafter"/>
</dbReference>
<dbReference type="GO" id="GO:0070181">
    <property type="term" value="F:small ribosomal subunit rRNA binding"/>
    <property type="evidence" value="ECO:0007669"/>
    <property type="project" value="TreeGrafter"/>
</dbReference>
<dbReference type="GO" id="GO:0003735">
    <property type="term" value="F:structural constituent of ribosome"/>
    <property type="evidence" value="ECO:0007669"/>
    <property type="project" value="InterPro"/>
</dbReference>
<dbReference type="GO" id="GO:0006412">
    <property type="term" value="P:translation"/>
    <property type="evidence" value="ECO:0007669"/>
    <property type="project" value="UniProtKB-UniRule"/>
</dbReference>
<dbReference type="FunFam" id="4.10.640.10:FF:000004">
    <property type="entry name" value="30S ribosomal protein S18"/>
    <property type="match status" value="1"/>
</dbReference>
<dbReference type="Gene3D" id="4.10.640.10">
    <property type="entry name" value="Ribosomal protein S18"/>
    <property type="match status" value="1"/>
</dbReference>
<dbReference type="HAMAP" id="MF_00270">
    <property type="entry name" value="Ribosomal_bS18"/>
    <property type="match status" value="1"/>
</dbReference>
<dbReference type="InterPro" id="IPR001648">
    <property type="entry name" value="Ribosomal_bS18"/>
</dbReference>
<dbReference type="InterPro" id="IPR018275">
    <property type="entry name" value="Ribosomal_bS18_CS"/>
</dbReference>
<dbReference type="InterPro" id="IPR036870">
    <property type="entry name" value="Ribosomal_bS18_sf"/>
</dbReference>
<dbReference type="NCBIfam" id="TIGR00165">
    <property type="entry name" value="S18"/>
    <property type="match status" value="1"/>
</dbReference>
<dbReference type="PANTHER" id="PTHR13479">
    <property type="entry name" value="30S RIBOSOMAL PROTEIN S18"/>
    <property type="match status" value="1"/>
</dbReference>
<dbReference type="PANTHER" id="PTHR13479:SF40">
    <property type="entry name" value="SMALL RIBOSOMAL SUBUNIT PROTEIN BS18M"/>
    <property type="match status" value="1"/>
</dbReference>
<dbReference type="Pfam" id="PF01084">
    <property type="entry name" value="Ribosomal_S18"/>
    <property type="match status" value="1"/>
</dbReference>
<dbReference type="PRINTS" id="PR00974">
    <property type="entry name" value="RIBOSOMALS18"/>
</dbReference>
<dbReference type="SUPFAM" id="SSF46911">
    <property type="entry name" value="Ribosomal protein S18"/>
    <property type="match status" value="1"/>
</dbReference>
<dbReference type="PROSITE" id="PS00057">
    <property type="entry name" value="RIBOSOMAL_S18"/>
    <property type="match status" value="1"/>
</dbReference>